<organismHost>
    <name type="scientific">Solanum tuberosum</name>
    <name type="common">Potato</name>
    <dbReference type="NCBI Taxonomy" id="4113"/>
</organismHost>
<proteinExistence type="evidence at protein level"/>
<feature type="signal peptide" evidence="1">
    <location>
        <begin position="1"/>
        <end position="20"/>
    </location>
</feature>
<feature type="chain" id="PRO_0000222396" description="Protein P1">
    <location>
        <begin position="21"/>
        <end position="639"/>
    </location>
</feature>
<feature type="chain" id="PRO_0000390899" description="Serine protease" evidence="1">
    <location>
        <begin position="205"/>
        <end position="399"/>
    </location>
</feature>
<feature type="chain" id="PRO_0000390900" description="VPg/P1-C25" evidence="1">
    <location>
        <begin position="400"/>
        <end position="639"/>
    </location>
</feature>
<feature type="transmembrane region" description="Helical" evidence="1">
    <location>
        <begin position="121"/>
        <end position="141"/>
    </location>
</feature>
<feature type="transmembrane region" description="Helical" evidence="1">
    <location>
        <begin position="144"/>
        <end position="164"/>
    </location>
</feature>
<feature type="transmembrane region" description="Helical" evidence="1">
    <location>
        <begin position="172"/>
        <end position="192"/>
    </location>
</feature>
<feature type="domain" description="Peptidase S39" evidence="2">
    <location>
        <begin position="207"/>
        <end position="399"/>
    </location>
</feature>
<feature type="region of interest" description="Disordered" evidence="3">
    <location>
        <begin position="455"/>
        <end position="515"/>
    </location>
</feature>
<feature type="region of interest" description="Disordered" evidence="3">
    <location>
        <begin position="539"/>
        <end position="639"/>
    </location>
</feature>
<feature type="compositionally biased region" description="Polar residues" evidence="3">
    <location>
        <begin position="463"/>
        <end position="488"/>
    </location>
</feature>
<feature type="compositionally biased region" description="Basic residues" evidence="3">
    <location>
        <begin position="548"/>
        <end position="561"/>
    </location>
</feature>
<feature type="compositionally biased region" description="Polar residues" evidence="3">
    <location>
        <begin position="566"/>
        <end position="577"/>
    </location>
</feature>
<feature type="compositionally biased region" description="Low complexity" evidence="3">
    <location>
        <begin position="587"/>
        <end position="602"/>
    </location>
</feature>
<feature type="active site" description="For protease activity" evidence="2 8">
    <location>
        <position position="255"/>
    </location>
</feature>
<feature type="active site" description="For protease activity" evidence="2 8">
    <location>
        <position position="286"/>
    </location>
</feature>
<feature type="active site" description="For protease activity" evidence="2 8">
    <location>
        <position position="354"/>
    </location>
</feature>
<feature type="site" description="Cleavage; by viral serine protease" evidence="1">
    <location>
        <begin position="204"/>
        <end position="205"/>
    </location>
</feature>
<feature type="site" description="Cleavage; by viral serine protease" evidence="7">
    <location>
        <begin position="399"/>
        <end position="400"/>
    </location>
</feature>
<feature type="mutagenesis site" description="Complete loss of viral genomic or subgenomic RNA production." evidence="4">
    <original>H</original>
    <variation>L</variation>
    <location>
        <position position="255"/>
    </location>
</feature>
<feature type="mutagenesis site" description="Complete loss of viral genomic or subgenomic RNA production." evidence="4">
    <original>D</original>
    <variation>A</variation>
    <location>
        <position position="286"/>
    </location>
</feature>
<feature type="mutagenesis site" description="Complete loss of viral genomic or subgenomic RNA production." evidence="4">
    <original>S</original>
    <variation>A</variation>
    <location>
        <position position="354"/>
    </location>
</feature>
<dbReference type="EC" id="3.4.21.-"/>
<dbReference type="EMBL" id="D00530">
    <property type="protein sequence ID" value="BAA00417.1"/>
    <property type="molecule type" value="Genomic_RNA"/>
</dbReference>
<dbReference type="PIR" id="JA0118">
    <property type="entry name" value="WMVQ70"/>
</dbReference>
<dbReference type="RefSeq" id="NP_056747.1">
    <property type="nucleotide sequence ID" value="NC_001747.1"/>
</dbReference>
<dbReference type="MEROPS" id="S39.002"/>
<dbReference type="KEGG" id="vg:1493894"/>
<dbReference type="Proteomes" id="UP000006723">
    <property type="component" value="Segment"/>
</dbReference>
<dbReference type="GO" id="GO:0016020">
    <property type="term" value="C:membrane"/>
    <property type="evidence" value="ECO:0007669"/>
    <property type="project" value="UniProtKB-SubCell"/>
</dbReference>
<dbReference type="GO" id="GO:0003723">
    <property type="term" value="F:RNA binding"/>
    <property type="evidence" value="ECO:0007669"/>
    <property type="project" value="UniProtKB-KW"/>
</dbReference>
<dbReference type="GO" id="GO:0004252">
    <property type="term" value="F:serine-type endopeptidase activity"/>
    <property type="evidence" value="ECO:0007669"/>
    <property type="project" value="InterPro"/>
</dbReference>
<dbReference type="GO" id="GO:0070008">
    <property type="term" value="F:serine-type exopeptidase activity"/>
    <property type="evidence" value="ECO:0007669"/>
    <property type="project" value="InterPro"/>
</dbReference>
<dbReference type="GO" id="GO:0006508">
    <property type="term" value="P:proteolysis"/>
    <property type="evidence" value="ECO:0007669"/>
    <property type="project" value="UniProtKB-KW"/>
</dbReference>
<dbReference type="GO" id="GO:0075523">
    <property type="term" value="P:viral translational frameshifting"/>
    <property type="evidence" value="ECO:0007669"/>
    <property type="project" value="UniProtKB-KW"/>
</dbReference>
<dbReference type="Gene3D" id="2.40.10.10">
    <property type="entry name" value="Trypsin-like serine proteases"/>
    <property type="match status" value="2"/>
</dbReference>
<dbReference type="InterPro" id="IPR018019">
    <property type="entry name" value="Luteovirus_Orf2"/>
</dbReference>
<dbReference type="InterPro" id="IPR009003">
    <property type="entry name" value="Peptidase_S1_PA"/>
</dbReference>
<dbReference type="InterPro" id="IPR043504">
    <property type="entry name" value="Peptidase_S1_PA_chymotrypsin"/>
</dbReference>
<dbReference type="InterPro" id="IPR000382">
    <property type="entry name" value="Peptidase_S39B_luteovirus"/>
</dbReference>
<dbReference type="Pfam" id="PF02122">
    <property type="entry name" value="Peptidase_S39"/>
    <property type="match status" value="1"/>
</dbReference>
<dbReference type="PRINTS" id="PR00913">
    <property type="entry name" value="LVIRUSORF2"/>
</dbReference>
<dbReference type="SUPFAM" id="SSF50494">
    <property type="entry name" value="Trypsin-like serine proteases"/>
    <property type="match status" value="1"/>
</dbReference>
<dbReference type="PROSITE" id="PS51868">
    <property type="entry name" value="PEPTIDASE_S39"/>
    <property type="match status" value="1"/>
</dbReference>
<comment type="function">
    <text evidence="5">Precursor from which the VPg molecule is probably released at the onset of the RNA synthesis. Essential for virus replication. Participates, together with the proteins P0 and P7, in the inhibition of the induction of aphid-induced host phytohormones (PubMed:31758809). This could play a role in the attraction to the infected plants by aphids (PubMed:31758809).</text>
</comment>
<comment type="subcellular location">
    <molecule>Protein P1</molecule>
    <subcellularLocation>
        <location evidence="7">Membrane</location>
        <topology evidence="7">Multi-pass membrane protein</topology>
    </subcellularLocation>
</comment>
<comment type="alternative products">
    <event type="ribosomal frameshifting"/>
    <isoform>
        <id>P17519-1</id>
        <name>Protein P1</name>
        <sequence type="displayed"/>
    </isoform>
    <isoform>
        <id>P17520-1</id>
        <name>RNA-directed RNA polymerase</name>
        <sequence type="external"/>
    </isoform>
    <text evidence="7">The isoform P1 is produced by conventional translation, whereas the isoform RNA-directed RNA polymerase is produced by -1 ribosomal frameshifting between codons 487 and 488.</text>
</comment>
<comment type="domain">
    <text>The C-terminus part of protein P1 and VPg/P1-C25 displays RNA-binding properties.</text>
</comment>
<comment type="PTM">
    <text evidence="6">Specific enzymatic cleavages in vivo yield mature proteins. The protease probably cleaves itself and releases the VPg protein. The VPg protein is probably further cleaved in its C-terminus.</text>
</comment>
<comment type="similarity">
    <text evidence="7">Belongs to the peptidase S39B family.</text>
</comment>
<keyword id="KW-0903">Direct protein sequencing</keyword>
<keyword id="KW-0378">Hydrolase</keyword>
<keyword id="KW-0472">Membrane</keyword>
<keyword id="KW-0645">Protease</keyword>
<keyword id="KW-1185">Reference proteome</keyword>
<keyword id="KW-0688">Ribosomal frameshifting</keyword>
<keyword id="KW-0694">RNA-binding</keyword>
<keyword id="KW-0720">Serine protease</keyword>
<keyword id="KW-0732">Signal</keyword>
<keyword id="KW-0812">Transmembrane</keyword>
<keyword id="KW-1133">Transmembrane helix</keyword>
<organism>
    <name type="scientific">Potato leafroll virus (strain Potato/Scotland/strain 1/1984)</name>
    <name type="common">PLrV</name>
    <dbReference type="NCBI Taxonomy" id="12046"/>
    <lineage>
        <taxon>Viruses</taxon>
        <taxon>Riboviria</taxon>
        <taxon>Orthornavirae</taxon>
        <taxon>Pisuviricota</taxon>
        <taxon>Pisoniviricetes</taxon>
        <taxon>Sobelivirales</taxon>
        <taxon>Solemoviridae</taxon>
        <taxon>Polerovirus</taxon>
        <taxon>Potato leafroll virus</taxon>
    </lineage>
</organism>
<name>P1_PLRV1</name>
<protein>
    <recommendedName>
        <fullName>Protein P1</fullName>
    </recommendedName>
    <alternativeName>
        <fullName>69.7 kDa protein</fullName>
    </alternativeName>
    <alternativeName>
        <fullName>Genome-linked protein precursor</fullName>
    </alternativeName>
    <alternativeName>
        <fullName>Protein ORF1</fullName>
    </alternativeName>
    <component>
        <recommendedName>
            <fullName>Serine protease</fullName>
            <ecNumber>3.4.21.-</ecNumber>
        </recommendedName>
    </component>
    <component>
        <recommendedName>
            <fullName>VPg/P1-C25</fullName>
        </recommendedName>
    </component>
</protein>
<sequence length="639" mass="69629">MNRFTAYAALFFMFSLCSTAKEAGFLHPAFNFRGTSTMSASSGDYSAAPTPLYKSWALPSSLNLTTQPPPPLTDRSYYELVQALTSKMRLDCQTVGDMTWRHLSEMLFASWNSVKEVSLKAASVTLWAIINIWFGLYWTLARLITLFLWTFSIEALCLILLGCITSLIYKGALSLSEHLPVFLFMSPLKIIWRAAFSKRNYKNERAVEGYKGFSVPQKPPKSAVIELQHENGSHLGYANCIRLYSGENALVTAEHCLEGAFATSLKTGNRIPMSTFFPIFKSARNDISILVGPPNWEGLLSVKGAHFITADKIGKGPASFYTLEKGEWMCHSATIDGAHHQFVSVLCNTGPGYSGTGFWSSKNLLGVLKGFPLEEECNYNVMSVIPSIPGITSPNYVFESTAVKGRVFSDEAVKELEREASEAVKKLARFKSLTDKNWADDYDSDEDYGLEREAATNAPAEKTAQTNSAEKTAPSTSAEKTALTNKPLNGQAAPSAKTNGNSDIPDAATSAPPMDKMVEQIITAMVGRINLSEIEEKIVSRVSQKALQKPKQKKRGRRGGKNKQNSLPPTSTQSTSGAPKKEAAPQASGSAGTSRATTTPAPEAKPSGGKNSAKFTPSWRIKQQDSAGQKPDLKLNSKA</sequence>
<reference key="1">
    <citation type="journal article" date="1989" name="J. Gen. Virol.">
        <title>Nucleotide sequence of potato leafroll luteovirus RNA.</title>
        <authorList>
            <person name="Mayo M.A."/>
            <person name="Robinson D.J."/>
            <person name="Jolly C.A."/>
            <person name="Hyman L."/>
        </authorList>
    </citation>
    <scope>NUCLEOTIDE SEQUENCE [GENOMIC RNA]</scope>
</reference>
<reference key="2">
    <citation type="journal article" date="1992" name="EMBO J.">
        <title>Ribosomal frameshifting in plants: a novel signal directs the -1 frameshift in the synthesis of the putative viral replicase of potato leafroll luteovirus.</title>
        <authorList>
            <person name="Prufer D."/>
            <person name="Tacke E."/>
            <person name="Schmitz J."/>
            <person name="Kull B."/>
            <person name="Kaufmann A."/>
            <person name="Rohde W."/>
        </authorList>
    </citation>
    <scope>RIBOSOMAL FRAMESHIFTING</scope>
</reference>
<reference key="3">
    <citation type="journal article" date="1997" name="Virology">
        <title>The genome-linked protein of potato leafroll virus is located downstream of the putative protease domain of the ORF1 product.</title>
        <authorList>
            <person name="van der Wilk F."/>
            <person name="Verbeek M."/>
            <person name="Dullemans A.M."/>
            <person name="van den Heuvel J.F.J.M."/>
        </authorList>
    </citation>
    <scope>PROTEOLYTIC PROCESSING OF POLYPROTEIN</scope>
    <scope>IDENTIFICATION OF VPG</scope>
    <scope>PROTEIN SEQUENCE OF 400-431</scope>
</reference>
<reference key="4">
    <citation type="journal article" date="1999" name="Nucleic Acids Res.">
        <title>Immunological analysis of potato leafroll luteovirus (PLRV) P1 expression identifies a 25 kDa RNA-binding protein derived via P1 processing.</title>
        <authorList>
            <person name="Prufer D."/>
            <person name="Kawchuk L."/>
            <person name="Monecke M."/>
            <person name="Nowok S."/>
            <person name="Fischer R."/>
            <person name="Rohde W."/>
        </authorList>
    </citation>
    <scope>RNA-BINDING</scope>
</reference>
<reference key="5">
    <citation type="journal article" date="2001" name="J. Gen. Virol.">
        <title>Mutational analysis of the proteinase function of Potato leafroll virus.</title>
        <authorList>
            <person name="Sadowy E."/>
            <person name="Juszczuk M."/>
            <person name="David C."/>
            <person name="Gronenborn B."/>
            <person name="Hulanicka M.D."/>
        </authorList>
    </citation>
    <scope>ACTIVE SITES OF SERINE PROTEASE</scope>
    <scope>MUTAGENESIS OF HIS-255; ASP-286 AND SER-354</scope>
    <source>
        <strain>Isolate Polish</strain>
    </source>
</reference>
<reference key="6">
    <citation type="journal article" date="2020" name="Plant Cell Environ.">
        <title>A polerovirus, Potato leafroll virus, alters plant-vector interactions using three viral proteins.</title>
        <authorList>
            <person name="Patton M.F."/>
            <person name="Bak A."/>
            <person name="Sayre J.M."/>
            <person name="Heck M.L."/>
            <person name="Casteel C.L."/>
        </authorList>
    </citation>
    <scope>FUNCTION</scope>
</reference>
<accession>P17519</accession>
<gene>
    <name type="ORF">ORF1</name>
</gene>
<evidence type="ECO:0000255" key="1"/>
<evidence type="ECO:0000255" key="2">
    <source>
        <dbReference type="PROSITE-ProRule" id="PRU01216"/>
    </source>
</evidence>
<evidence type="ECO:0000256" key="3">
    <source>
        <dbReference type="SAM" id="MobiDB-lite"/>
    </source>
</evidence>
<evidence type="ECO:0000269" key="4">
    <source>
    </source>
</evidence>
<evidence type="ECO:0000269" key="5">
    <source>
    </source>
</evidence>
<evidence type="ECO:0000269" key="6">
    <source>
    </source>
</evidence>
<evidence type="ECO:0000305" key="7"/>
<evidence type="ECO:0000305" key="8">
    <source>
    </source>
</evidence>